<organism>
    <name type="scientific">Thymus vulgaris</name>
    <name type="common">Thyme</name>
    <dbReference type="NCBI Taxonomy" id="49992"/>
    <lineage>
        <taxon>Eukaryota</taxon>
        <taxon>Viridiplantae</taxon>
        <taxon>Streptophyta</taxon>
        <taxon>Embryophyta</taxon>
        <taxon>Tracheophyta</taxon>
        <taxon>Spermatophyta</taxon>
        <taxon>Magnoliopsida</taxon>
        <taxon>eudicotyledons</taxon>
        <taxon>Gunneridae</taxon>
        <taxon>Pentapetalae</taxon>
        <taxon>asterids</taxon>
        <taxon>lamiids</taxon>
        <taxon>Lamiales</taxon>
        <taxon>Lamiaceae</taxon>
        <taxon>Nepetoideae</taxon>
        <taxon>Mentheae</taxon>
        <taxon>Thymus</taxon>
    </lineage>
</organism>
<accession>K9Y6Y9</accession>
<accession>A0A5P8U4C2</accession>
<accession>K9Y851</accession>
<accession>V5JZJ2</accession>
<sequence>MATLSMQVSTLSKQVKNLNTFGMGSASKLPMVARRVSTTRLRPICSASLQVEEETRRSGNYQAPVWNNDFIQSFSTDKYKDEKFLKKKEELIAQVKVLLNTKMEAVKQLELIEDLRNLGLTYYFEDEFKKILTSIYNEHKGFKNEQVGDLYFTSLAFRLLRLHGFDVSEDVFNFFKNEDGSDFKASLGENTKDVLELYEASFLIRVGEVTLEQARVFSTKILEKKVEEGIKDEKLLAWIQHSLALPLHWRIQRLEARWFLDAYKARKDMNPIIYELGKIDFHIIQETQLQEVQEVSQWWTNTNLAEKLPFVRDRIVECYFWALGLFEPHEYGYQRKMAAIIITFVTIIDDVYDVYGTLDELQLFTDAIRKWDVESISTLPYYMQVCYLAVFTYASELAYDILKDQGFNSISYLQRSWLSLVEGFFQEAKWYYAGYTPTLAEYLENAKVSISSPTIISQVYFTLPNSTERTVVENVFGYHNILYLSGMILRLADDLGTTQFELKRGDVQKAIQCYMNDNNATEEEGTEHVKYLLREAWQEMNSAMADPDCPLSEDLVFAAANLGRASQFIYLDGDGHGVQHSEIHNQMGGLIFEPYV</sequence>
<feature type="transit peptide" description="Chloroplast" evidence="5">
    <location>
        <begin position="1"/>
        <end position="46"/>
    </location>
</feature>
<feature type="chain" id="PRO_0000453310" description="Putative terpene synthase 2, chloroplastic">
    <location>
        <begin position="47"/>
        <end position="596"/>
    </location>
</feature>
<feature type="region of interest" description="Homodimerization" evidence="1">
    <location>
        <begin position="355"/>
        <end position="361"/>
    </location>
</feature>
<feature type="region of interest" description="Homodimerization" evidence="1">
    <location>
        <begin position="427"/>
        <end position="464"/>
    </location>
</feature>
<feature type="short sequence motif" description="DDXXD motif" evidence="4">
    <location>
        <begin position="349"/>
        <end position="353"/>
    </location>
</feature>
<feature type="binding site" evidence="2">
    <location>
        <position position="349"/>
    </location>
    <ligand>
        <name>Mn(2+)</name>
        <dbReference type="ChEBI" id="CHEBI:29035"/>
        <label>1</label>
    </ligand>
</feature>
<feature type="binding site" evidence="2">
    <location>
        <position position="349"/>
    </location>
    <ligand>
        <name>Mn(2+)</name>
        <dbReference type="ChEBI" id="CHEBI:29035"/>
        <label>2</label>
    </ligand>
</feature>
<feature type="binding site" evidence="2">
    <location>
        <position position="353"/>
    </location>
    <ligand>
        <name>Mn(2+)</name>
        <dbReference type="ChEBI" id="CHEBI:29035"/>
        <label>1</label>
    </ligand>
</feature>
<feature type="binding site" evidence="2">
    <location>
        <position position="353"/>
    </location>
    <ligand>
        <name>Mn(2+)</name>
        <dbReference type="ChEBI" id="CHEBI:29035"/>
        <label>2</label>
    </ligand>
</feature>
<feature type="binding site" evidence="2">
    <location>
        <position position="493"/>
    </location>
    <ligand>
        <name>Mn(2+)</name>
        <dbReference type="ChEBI" id="CHEBI:29035"/>
        <label>3</label>
    </ligand>
</feature>
<feature type="binding site" evidence="2">
    <location>
        <position position="501"/>
    </location>
    <ligand>
        <name>Mn(2+)</name>
        <dbReference type="ChEBI" id="CHEBI:29035"/>
        <label>3</label>
    </ligand>
</feature>
<feature type="sequence conflict" description="In Ref. 2; AGS42395." evidence="9" ref="2">
    <original>T</original>
    <variation>S</variation>
    <location>
        <position position="3"/>
    </location>
</feature>
<feature type="sequence conflict" description="In Ref. 1; AFZ41787." evidence="9" ref="1">
    <original>T</original>
    <variation>I</variation>
    <location>
        <position position="39"/>
    </location>
</feature>
<feature type="sequence conflict" description="In Ref. 1; AFZ41787." evidence="9" ref="1">
    <original>E</original>
    <variation>K</variation>
    <location>
        <position position="54"/>
    </location>
</feature>
<feature type="sequence conflict" description="In Ref. 2; AGS42395." evidence="9" ref="2">
    <original>F</original>
    <variation>Y</variation>
    <location>
        <position position="84"/>
    </location>
</feature>
<feature type="sequence conflict" description="In Ref. 2; AGS42395." evidence="9" ref="2">
    <original>F</original>
    <variation>L</variation>
    <location>
        <position position="142"/>
    </location>
</feature>
<feature type="sequence conflict" description="In Ref. 4; QFS22625." evidence="9" ref="4">
    <original>E</original>
    <variation>Q</variation>
    <location>
        <position position="523"/>
    </location>
</feature>
<evidence type="ECO:0000250" key="1">
    <source>
        <dbReference type="UniProtKB" id="A0A0M3Q1Q3"/>
    </source>
</evidence>
<evidence type="ECO:0000250" key="2">
    <source>
        <dbReference type="UniProtKB" id="A0A1C9J6A7"/>
    </source>
</evidence>
<evidence type="ECO:0000250" key="3">
    <source>
        <dbReference type="UniProtKB" id="E2E2P0"/>
    </source>
</evidence>
<evidence type="ECO:0000250" key="4">
    <source>
        <dbReference type="UniProtKB" id="Q9X839"/>
    </source>
</evidence>
<evidence type="ECO:0000255" key="5"/>
<evidence type="ECO:0000269" key="6">
    <source>
    </source>
</evidence>
<evidence type="ECO:0000303" key="7">
    <source>
    </source>
</evidence>
<evidence type="ECO:0000303" key="8">
    <source>
    </source>
</evidence>
<evidence type="ECO:0000305" key="9"/>
<name>GTPS2_THYVU</name>
<proteinExistence type="evidence at transcript level"/>
<dbReference type="EC" id="4.2.3.-" evidence="3"/>
<dbReference type="EMBL" id="JQ957865">
    <property type="protein sequence ID" value="AFZ41787.1"/>
    <property type="molecule type" value="mRNA"/>
</dbReference>
<dbReference type="EMBL" id="JX997981">
    <property type="protein sequence ID" value="AGS42395.1"/>
    <property type="molecule type" value="mRNA"/>
</dbReference>
<dbReference type="EMBL" id="JQ957864">
    <property type="protein sequence ID" value="AFZ41786.1"/>
    <property type="molecule type" value="mRNA"/>
</dbReference>
<dbReference type="EMBL" id="MH686200">
    <property type="protein sequence ID" value="QFS22625.1"/>
    <property type="molecule type" value="mRNA"/>
</dbReference>
<dbReference type="SMR" id="K9Y6Y9"/>
<dbReference type="BRENDA" id="4.2.3.114">
    <property type="organism ID" value="12984"/>
</dbReference>
<dbReference type="UniPathway" id="UPA00213"/>
<dbReference type="GO" id="GO:0009507">
    <property type="term" value="C:chloroplast"/>
    <property type="evidence" value="ECO:0007669"/>
    <property type="project" value="UniProtKB-SubCell"/>
</dbReference>
<dbReference type="GO" id="GO:0000287">
    <property type="term" value="F:magnesium ion binding"/>
    <property type="evidence" value="ECO:0007669"/>
    <property type="project" value="InterPro"/>
</dbReference>
<dbReference type="GO" id="GO:0042803">
    <property type="term" value="F:protein homodimerization activity"/>
    <property type="evidence" value="ECO:0000250"/>
    <property type="project" value="UniProtKB"/>
</dbReference>
<dbReference type="GO" id="GO:0010333">
    <property type="term" value="F:terpene synthase activity"/>
    <property type="evidence" value="ECO:0007669"/>
    <property type="project" value="InterPro"/>
</dbReference>
<dbReference type="GO" id="GO:0016102">
    <property type="term" value="P:diterpenoid biosynthetic process"/>
    <property type="evidence" value="ECO:0007669"/>
    <property type="project" value="InterPro"/>
</dbReference>
<dbReference type="CDD" id="cd00684">
    <property type="entry name" value="Terpene_cyclase_plant_C1"/>
    <property type="match status" value="1"/>
</dbReference>
<dbReference type="FunFam" id="1.10.600.10:FF:000007">
    <property type="entry name" value="Isoprene synthase, chloroplastic"/>
    <property type="match status" value="1"/>
</dbReference>
<dbReference type="FunFam" id="1.50.10.130:FF:000001">
    <property type="entry name" value="Isoprene synthase, chloroplastic"/>
    <property type="match status" value="1"/>
</dbReference>
<dbReference type="Gene3D" id="1.10.600.10">
    <property type="entry name" value="Farnesyl Diphosphate Synthase"/>
    <property type="match status" value="1"/>
</dbReference>
<dbReference type="Gene3D" id="1.50.10.130">
    <property type="entry name" value="Terpene synthase, N-terminal domain"/>
    <property type="match status" value="1"/>
</dbReference>
<dbReference type="InterPro" id="IPR008949">
    <property type="entry name" value="Isoprenoid_synthase_dom_sf"/>
</dbReference>
<dbReference type="InterPro" id="IPR034741">
    <property type="entry name" value="Terpene_cyclase-like_1_C"/>
</dbReference>
<dbReference type="InterPro" id="IPR044814">
    <property type="entry name" value="Terpene_cyclase_plant_C1"/>
</dbReference>
<dbReference type="InterPro" id="IPR001906">
    <property type="entry name" value="Terpene_synth_N"/>
</dbReference>
<dbReference type="InterPro" id="IPR036965">
    <property type="entry name" value="Terpene_synth_N_sf"/>
</dbReference>
<dbReference type="InterPro" id="IPR050148">
    <property type="entry name" value="Terpene_synthase-like"/>
</dbReference>
<dbReference type="InterPro" id="IPR005630">
    <property type="entry name" value="Terpene_synthase_metal-bd"/>
</dbReference>
<dbReference type="InterPro" id="IPR008930">
    <property type="entry name" value="Terpenoid_cyclase/PrenylTrfase"/>
</dbReference>
<dbReference type="PANTHER" id="PTHR31225">
    <property type="entry name" value="OS04G0344100 PROTEIN-RELATED"/>
    <property type="match status" value="1"/>
</dbReference>
<dbReference type="PANTHER" id="PTHR31225:SF9">
    <property type="entry name" value="TERPENE SYNTHASE 10"/>
    <property type="match status" value="1"/>
</dbReference>
<dbReference type="Pfam" id="PF01397">
    <property type="entry name" value="Terpene_synth"/>
    <property type="match status" value="1"/>
</dbReference>
<dbReference type="Pfam" id="PF03936">
    <property type="entry name" value="Terpene_synth_C"/>
    <property type="match status" value="1"/>
</dbReference>
<dbReference type="SFLD" id="SFLDG01019">
    <property type="entry name" value="Terpene_Cyclase_Like_1_C_Termi"/>
    <property type="match status" value="1"/>
</dbReference>
<dbReference type="SFLD" id="SFLDG01604">
    <property type="entry name" value="Terpene_Cyclase_Like_1_C_Termi"/>
    <property type="match status" value="1"/>
</dbReference>
<dbReference type="SUPFAM" id="SSF48239">
    <property type="entry name" value="Terpenoid cyclases/Protein prenyltransferases"/>
    <property type="match status" value="1"/>
</dbReference>
<dbReference type="SUPFAM" id="SSF48576">
    <property type="entry name" value="Terpenoid synthases"/>
    <property type="match status" value="1"/>
</dbReference>
<keyword id="KW-0150">Chloroplast</keyword>
<keyword id="KW-0456">Lyase</keyword>
<keyword id="KW-0460">Magnesium</keyword>
<keyword id="KW-0464">Manganese</keyword>
<keyword id="KW-0479">Metal-binding</keyword>
<keyword id="KW-0934">Plastid</keyword>
<keyword id="KW-0809">Transit peptide</keyword>
<protein>
    <recommendedName>
        <fullName evidence="7 8">Putative terpene synthase 2, chloroplastic</fullName>
        <shortName evidence="8">TTPS2</shortName>
        <shortName evidence="7">TvTPS2</shortName>
        <ecNumber evidence="3">4.2.3.-</ecNumber>
    </recommendedName>
    <alternativeName>
        <fullName evidence="7">Inactive gamma-terpinene synthase 2, chloroplastic</fullName>
    </alternativeName>
</protein>
<comment type="function">
    <text evidence="3">Putative monoterpene synthase inactive on geranyl diphosphate (GPP).</text>
</comment>
<comment type="cofactor">
    <cofactor evidence="3">
        <name>Mn(2+)</name>
        <dbReference type="ChEBI" id="CHEBI:29035"/>
    </cofactor>
    <cofactor evidence="3">
        <name>Mg(2+)</name>
        <dbReference type="ChEBI" id="CHEBI:18420"/>
    </cofactor>
    <text evidence="3">Binds 3 Mg(2+) or Mn(2+) ions per subunit.</text>
</comment>
<comment type="pathway">
    <text evidence="3">Secondary metabolite biosynthesis; terpenoid biosynthesis.</text>
</comment>
<comment type="subunit">
    <text evidence="1">Homodimer.</text>
</comment>
<comment type="subcellular location">
    <subcellularLocation>
        <location evidence="5">Plastid</location>
        <location evidence="5">Chloroplast</location>
    </subcellularLocation>
</comment>
<comment type="domain">
    <text evidence="4">The Asp-Asp-Xaa-Xaa-Asp/Glu (DDXXD/E) motif is important for the catalytic activity, presumably through binding to Mg(2+).</text>
</comment>
<comment type="miscellaneous">
    <text evidence="6">Missing Asp-356 and Thr-565 residues essential for gamma-terpinene synthase activity.</text>
</comment>
<comment type="similarity">
    <text evidence="9">Belongs to the terpene synthase family.</text>
</comment>
<reference key="1">
    <citation type="submission" date="2012-04" db="EMBL/GenBank/DDBJ databases">
        <title>Gamma-terpinene synthase from Thymus vulgaris (GTS).</title>
        <authorList>
            <person name="Rudolph K."/>
            <person name="Schweininger J."/>
            <person name="Mueller-Uri F."/>
            <person name="Kreis W."/>
        </authorList>
    </citation>
    <scope>NUCLEOTIDE SEQUENCE [MRNA]</scope>
    <source>
        <tissue>Leaf</tissue>
    </source>
</reference>
<reference key="2">
    <citation type="submission" date="2012-10" db="EMBL/GenBank/DDBJ databases">
        <title>Chemotype regulation in thyme (Thymus vulgaris) is based on terpene synthase expression patterns.</title>
        <authorList>
            <person name="Schimmel J."/>
            <person name="Krause S.T."/>
            <person name="Asbach J."/>
            <person name="Degenhardt J."/>
        </authorList>
    </citation>
    <scope>NUCLEOTIDE SEQUENCE [MRNA]</scope>
</reference>
<reference key="3">
    <citation type="journal article" date="2016" name="Acta Crystallogr. F Struct. Biol. Commun.">
        <title>Expression, crystallization and structure elucidation of gamma-terpinene synthase from Thymus vulgaris.</title>
        <authorList>
            <person name="Rudolph K."/>
            <person name="Parthier C."/>
            <person name="Egerer-Sieber C."/>
            <person name="Geiger D."/>
            <person name="Muller Y.A."/>
            <person name="Kreis W."/>
            <person name="Mueller-Uri F."/>
        </authorList>
    </citation>
    <scope>NUCLEOTIDE SEQUENCE [MRNA]</scope>
    <source>
        <tissue>Leaf</tissue>
    </source>
</reference>
<reference key="4">
    <citation type="journal article" date="2020" name="Phytochemistry">
        <title>Sequencing and variation of terpene synthase gene (TPS2) as the major gene in biosynthesis of thymol in different Thymus species.</title>
        <authorList>
            <person name="Tohidi B."/>
            <person name="Rahimmalek M."/>
            <person name="Arzani A."/>
            <person name="Trindade H."/>
        </authorList>
    </citation>
    <scope>NUCLEOTIDE SEQUENCE [MRNA]</scope>
</reference>
<gene>
    <name evidence="7 8" type="primary">TPS2</name>
</gene>